<protein>
    <recommendedName>
        <fullName>26S proteasome regulatory subunit 4 homolog</fullName>
    </recommendedName>
    <alternativeName>
        <fullName>Protein mts2</fullName>
    </alternativeName>
</protein>
<dbReference type="EMBL" id="Z29366">
    <property type="protein sequence ID" value="CAA82554.1"/>
    <property type="molecule type" value="mRNA"/>
</dbReference>
<dbReference type="EMBL" id="CU329671">
    <property type="protein sequence ID" value="CAB58406.1"/>
    <property type="molecule type" value="Genomic_DNA"/>
</dbReference>
<dbReference type="PIR" id="S39348">
    <property type="entry name" value="S39348"/>
</dbReference>
<dbReference type="RefSeq" id="NP_595480.1">
    <property type="nucleotide sequence ID" value="NM_001021391.2"/>
</dbReference>
<dbReference type="SMR" id="P36612"/>
<dbReference type="BioGRID" id="277455">
    <property type="interactions" value="30"/>
</dbReference>
<dbReference type="ComplexPortal" id="CPX-9077">
    <property type="entry name" value="26S proteasome complex"/>
</dbReference>
<dbReference type="FunCoup" id="P36612">
    <property type="interactions" value="440"/>
</dbReference>
<dbReference type="IntAct" id="P36612">
    <property type="interactions" value="1"/>
</dbReference>
<dbReference type="STRING" id="284812.P36612"/>
<dbReference type="iPTMnet" id="P36612"/>
<dbReference type="PaxDb" id="4896-SPBC4.07c.1"/>
<dbReference type="EnsemblFungi" id="SPBC4.07c.1">
    <property type="protein sequence ID" value="SPBC4.07c.1:pep"/>
    <property type="gene ID" value="SPBC4.07c"/>
</dbReference>
<dbReference type="GeneID" id="2540939"/>
<dbReference type="KEGG" id="spo:2540939"/>
<dbReference type="PomBase" id="SPBC4.07c"/>
<dbReference type="VEuPathDB" id="FungiDB:SPBC4.07c"/>
<dbReference type="eggNOG" id="KOG0726">
    <property type="taxonomic scope" value="Eukaryota"/>
</dbReference>
<dbReference type="HOGENOM" id="CLU_000688_2_3_1"/>
<dbReference type="InParanoid" id="P36612"/>
<dbReference type="OMA" id="QDDTDPM"/>
<dbReference type="PhylomeDB" id="P36612"/>
<dbReference type="Reactome" id="R-SPO-1236978">
    <property type="pathway name" value="Cross-presentation of soluble exogenous antigens (endosomes)"/>
</dbReference>
<dbReference type="Reactome" id="R-SPO-350562">
    <property type="pathway name" value="Regulation of ornithine decarboxylase (ODC)"/>
</dbReference>
<dbReference type="Reactome" id="R-SPO-5687128">
    <property type="pathway name" value="MAPK6/MAPK4 signaling"/>
</dbReference>
<dbReference type="Reactome" id="R-SPO-5689603">
    <property type="pathway name" value="UCH proteinases"/>
</dbReference>
<dbReference type="Reactome" id="R-SPO-5689880">
    <property type="pathway name" value="Ub-specific processing proteases"/>
</dbReference>
<dbReference type="Reactome" id="R-SPO-68949">
    <property type="pathway name" value="Orc1 removal from chromatin"/>
</dbReference>
<dbReference type="Reactome" id="R-SPO-69017">
    <property type="pathway name" value="CDK-mediated phosphorylation and removal of Cdc6"/>
</dbReference>
<dbReference type="Reactome" id="R-SPO-69601">
    <property type="pathway name" value="Ubiquitin Mediated Degradation of Phosphorylated Cdc25A"/>
</dbReference>
<dbReference type="Reactome" id="R-SPO-75815">
    <property type="pathway name" value="Ubiquitin-dependent degradation of Cyclin D"/>
</dbReference>
<dbReference type="Reactome" id="R-SPO-8854050">
    <property type="pathway name" value="FBXL7 down-regulates AURKA during mitotic entry and in early mitosis"/>
</dbReference>
<dbReference type="Reactome" id="R-SPO-8948751">
    <property type="pathway name" value="Regulation of PTEN stability and activity"/>
</dbReference>
<dbReference type="Reactome" id="R-SPO-8951664">
    <property type="pathway name" value="Neddylation"/>
</dbReference>
<dbReference type="Reactome" id="R-SPO-9755511">
    <property type="pathway name" value="KEAP1-NFE2L2 pathway"/>
</dbReference>
<dbReference type="Reactome" id="R-SPO-983168">
    <property type="pathway name" value="Antigen processing: Ubiquitination &amp; Proteasome degradation"/>
</dbReference>
<dbReference type="Reactome" id="R-SPO-9907900">
    <property type="pathway name" value="Proteasome assembly"/>
</dbReference>
<dbReference type="PRO" id="PR:P36612"/>
<dbReference type="Proteomes" id="UP000002485">
    <property type="component" value="Chromosome II"/>
</dbReference>
<dbReference type="GO" id="GO:0000785">
    <property type="term" value="C:chromatin"/>
    <property type="evidence" value="ECO:0000314"/>
    <property type="project" value="PomBase"/>
</dbReference>
<dbReference type="GO" id="GO:0005829">
    <property type="term" value="C:cytosol"/>
    <property type="evidence" value="ECO:0007005"/>
    <property type="project" value="PomBase"/>
</dbReference>
<dbReference type="GO" id="GO:0005634">
    <property type="term" value="C:nucleus"/>
    <property type="evidence" value="ECO:0007005"/>
    <property type="project" value="PomBase"/>
</dbReference>
<dbReference type="GO" id="GO:0005838">
    <property type="term" value="C:proteasome regulatory particle"/>
    <property type="evidence" value="ECO:0000314"/>
    <property type="project" value="PomBase"/>
</dbReference>
<dbReference type="GO" id="GO:0008540">
    <property type="term" value="C:proteasome regulatory particle, base subcomplex"/>
    <property type="evidence" value="ECO:0000314"/>
    <property type="project" value="PomBase"/>
</dbReference>
<dbReference type="GO" id="GO:0005524">
    <property type="term" value="F:ATP binding"/>
    <property type="evidence" value="ECO:0007669"/>
    <property type="project" value="UniProtKB-KW"/>
</dbReference>
<dbReference type="GO" id="GO:0016887">
    <property type="term" value="F:ATP hydrolysis activity"/>
    <property type="evidence" value="ECO:0000303"/>
    <property type="project" value="PomBase"/>
</dbReference>
<dbReference type="GO" id="GO:0036402">
    <property type="term" value="F:proteasome-activating activity"/>
    <property type="evidence" value="ECO:0000318"/>
    <property type="project" value="GO_Central"/>
</dbReference>
<dbReference type="GO" id="GO:0010498">
    <property type="term" value="P:proteasomal protein catabolic process"/>
    <property type="evidence" value="ECO:0000269"/>
    <property type="project" value="PomBase"/>
</dbReference>
<dbReference type="GO" id="GO:0043161">
    <property type="term" value="P:proteasome-mediated ubiquitin-dependent protein catabolic process"/>
    <property type="evidence" value="ECO:0000318"/>
    <property type="project" value="GO_Central"/>
</dbReference>
<dbReference type="FunFam" id="2.40.50.140:FF:000067">
    <property type="entry name" value="26S protease regulatory subunit 4"/>
    <property type="match status" value="1"/>
</dbReference>
<dbReference type="FunFam" id="1.10.8.60:FF:000007">
    <property type="entry name" value="26S proteasome regulatory subunit 4"/>
    <property type="match status" value="1"/>
</dbReference>
<dbReference type="FunFam" id="3.40.50.300:FF:000039">
    <property type="entry name" value="26S proteasome regulatory subunit 4"/>
    <property type="match status" value="1"/>
</dbReference>
<dbReference type="Gene3D" id="1.10.8.60">
    <property type="match status" value="1"/>
</dbReference>
<dbReference type="Gene3D" id="2.40.50.140">
    <property type="entry name" value="Nucleic acid-binding proteins"/>
    <property type="match status" value="1"/>
</dbReference>
<dbReference type="Gene3D" id="3.40.50.300">
    <property type="entry name" value="P-loop containing nucleotide triphosphate hydrolases"/>
    <property type="match status" value="1"/>
</dbReference>
<dbReference type="InterPro" id="IPR050221">
    <property type="entry name" value="26S_Proteasome_ATPase"/>
</dbReference>
<dbReference type="InterPro" id="IPR003593">
    <property type="entry name" value="AAA+_ATPase"/>
</dbReference>
<dbReference type="InterPro" id="IPR041569">
    <property type="entry name" value="AAA_lid_3"/>
</dbReference>
<dbReference type="InterPro" id="IPR003959">
    <property type="entry name" value="ATPase_AAA_core"/>
</dbReference>
<dbReference type="InterPro" id="IPR003960">
    <property type="entry name" value="ATPase_AAA_CS"/>
</dbReference>
<dbReference type="InterPro" id="IPR012340">
    <property type="entry name" value="NA-bd_OB-fold"/>
</dbReference>
<dbReference type="InterPro" id="IPR027417">
    <property type="entry name" value="P-loop_NTPase"/>
</dbReference>
<dbReference type="InterPro" id="IPR032501">
    <property type="entry name" value="Prot_ATP_ID_OB_2nd"/>
</dbReference>
<dbReference type="PANTHER" id="PTHR23073">
    <property type="entry name" value="26S PROTEASOME REGULATORY SUBUNIT"/>
    <property type="match status" value="1"/>
</dbReference>
<dbReference type="Pfam" id="PF00004">
    <property type="entry name" value="AAA"/>
    <property type="match status" value="1"/>
</dbReference>
<dbReference type="Pfam" id="PF17862">
    <property type="entry name" value="AAA_lid_3"/>
    <property type="match status" value="1"/>
</dbReference>
<dbReference type="Pfam" id="PF16450">
    <property type="entry name" value="Prot_ATP_ID_OB_C"/>
    <property type="match status" value="1"/>
</dbReference>
<dbReference type="SMART" id="SM00382">
    <property type="entry name" value="AAA"/>
    <property type="match status" value="1"/>
</dbReference>
<dbReference type="SUPFAM" id="SSF52540">
    <property type="entry name" value="P-loop containing nucleoside triphosphate hydrolases"/>
    <property type="match status" value="1"/>
</dbReference>
<dbReference type="PROSITE" id="PS00674">
    <property type="entry name" value="AAA"/>
    <property type="match status" value="1"/>
</dbReference>
<proteinExistence type="evidence at transcript level"/>
<comment type="function">
    <text>The 26S proteasome is involved in the ATP-dependent degradation of ubiquitinated proteins. The regulatory (or ATPase) complex confers ATP dependency and substrate specificity to the 26S complex.</text>
</comment>
<comment type="subcellular location">
    <subcellularLocation>
        <location evidence="3">Cytoplasm</location>
    </subcellularLocation>
    <subcellularLocation>
        <location evidence="3">Nucleus</location>
    </subcellularLocation>
</comment>
<comment type="similarity">
    <text evidence="3">Belongs to the AAA ATPase family.</text>
</comment>
<sequence>MGQAQSGNFSNFGDGANGDNKKDQKKDKPKYEPPVPTRTGRRKKKAQSGPDASAKLPTVIPTTRCRLRLLKMQRIHDHLLMEEEYVQNQERLKPQDERTQEERNRVDEIRGTPMSVGTLEEIIDDDHAIVSTAGPEYYVSIMSFVDKDMLEPGCSVLLHHKAMSIVGLLLDDTDPMINVMKLDKAPTESYADIGGLESQIQEIKEAVELPLTHPELYEEMGIKPPKGVILYGAPGTGKTLLAKAVANQTSATFLRVVGSELIQKYLGDGPRLVRQLFNAAEEHSPSIVFIDEIDAIGTKRYDAQSGAEREIQRTMLELLNQLDGFDTSQRDIKVIMATNRISDLDPALIRPGRIDRKILFENPDEATKRKIFTIHTSKMNLGEDVNLEELIQCKDDLSGAEIKAIVSEAGLLALRERRMRVVMDDFRQAREKVLKTKDEGGPAGGLYI</sequence>
<gene>
    <name type="primary">mts2</name>
    <name type="ORF">SPBC4.07c</name>
</gene>
<evidence type="ECO:0000255" key="1"/>
<evidence type="ECO:0000256" key="2">
    <source>
        <dbReference type="SAM" id="MobiDB-lite"/>
    </source>
</evidence>
<evidence type="ECO:0000305" key="3"/>
<keyword id="KW-0067">ATP-binding</keyword>
<keyword id="KW-0963">Cytoplasm</keyword>
<keyword id="KW-0547">Nucleotide-binding</keyword>
<keyword id="KW-0539">Nucleus</keyword>
<keyword id="KW-0647">Proteasome</keyword>
<keyword id="KW-1185">Reference proteome</keyword>
<reference key="1">
    <citation type="journal article" date="1993" name="Nature">
        <title>Defective mitosis due to a mutation in the gene for a fission yeast 26S protease subunit.</title>
        <authorList>
            <person name="Gordon C.B."/>
            <person name="McGurk G."/>
            <person name="Dillon P."/>
            <person name="Rosen C."/>
            <person name="Hastie N.D."/>
        </authorList>
    </citation>
    <scope>NUCLEOTIDE SEQUENCE [MRNA]</scope>
    <source>
        <strain>972 / ATCC 24843</strain>
    </source>
</reference>
<reference key="2">
    <citation type="journal article" date="2002" name="Nature">
        <title>The genome sequence of Schizosaccharomyces pombe.</title>
        <authorList>
            <person name="Wood V."/>
            <person name="Gwilliam R."/>
            <person name="Rajandream M.A."/>
            <person name="Lyne M.H."/>
            <person name="Lyne R."/>
            <person name="Stewart A."/>
            <person name="Sgouros J.G."/>
            <person name="Peat N."/>
            <person name="Hayles J."/>
            <person name="Baker S.G."/>
            <person name="Basham D."/>
            <person name="Bowman S."/>
            <person name="Brooks K."/>
            <person name="Brown D."/>
            <person name="Brown S."/>
            <person name="Chillingworth T."/>
            <person name="Churcher C.M."/>
            <person name="Collins M."/>
            <person name="Connor R."/>
            <person name="Cronin A."/>
            <person name="Davis P."/>
            <person name="Feltwell T."/>
            <person name="Fraser A."/>
            <person name="Gentles S."/>
            <person name="Goble A."/>
            <person name="Hamlin N."/>
            <person name="Harris D.E."/>
            <person name="Hidalgo J."/>
            <person name="Hodgson G."/>
            <person name="Holroyd S."/>
            <person name="Hornsby T."/>
            <person name="Howarth S."/>
            <person name="Huckle E.J."/>
            <person name="Hunt S."/>
            <person name="Jagels K."/>
            <person name="James K.D."/>
            <person name="Jones L."/>
            <person name="Jones M."/>
            <person name="Leather S."/>
            <person name="McDonald S."/>
            <person name="McLean J."/>
            <person name="Mooney P."/>
            <person name="Moule S."/>
            <person name="Mungall K.L."/>
            <person name="Murphy L.D."/>
            <person name="Niblett D."/>
            <person name="Odell C."/>
            <person name="Oliver K."/>
            <person name="O'Neil S."/>
            <person name="Pearson D."/>
            <person name="Quail M.A."/>
            <person name="Rabbinowitsch E."/>
            <person name="Rutherford K.M."/>
            <person name="Rutter S."/>
            <person name="Saunders D."/>
            <person name="Seeger K."/>
            <person name="Sharp S."/>
            <person name="Skelton J."/>
            <person name="Simmonds M.N."/>
            <person name="Squares R."/>
            <person name="Squares S."/>
            <person name="Stevens K."/>
            <person name="Taylor K."/>
            <person name="Taylor R.G."/>
            <person name="Tivey A."/>
            <person name="Walsh S.V."/>
            <person name="Warren T."/>
            <person name="Whitehead S."/>
            <person name="Woodward J.R."/>
            <person name="Volckaert G."/>
            <person name="Aert R."/>
            <person name="Robben J."/>
            <person name="Grymonprez B."/>
            <person name="Weltjens I."/>
            <person name="Vanstreels E."/>
            <person name="Rieger M."/>
            <person name="Schaefer M."/>
            <person name="Mueller-Auer S."/>
            <person name="Gabel C."/>
            <person name="Fuchs M."/>
            <person name="Duesterhoeft A."/>
            <person name="Fritzc C."/>
            <person name="Holzer E."/>
            <person name="Moestl D."/>
            <person name="Hilbert H."/>
            <person name="Borzym K."/>
            <person name="Langer I."/>
            <person name="Beck A."/>
            <person name="Lehrach H."/>
            <person name="Reinhardt R."/>
            <person name="Pohl T.M."/>
            <person name="Eger P."/>
            <person name="Zimmermann W."/>
            <person name="Wedler H."/>
            <person name="Wambutt R."/>
            <person name="Purnelle B."/>
            <person name="Goffeau A."/>
            <person name="Cadieu E."/>
            <person name="Dreano S."/>
            <person name="Gloux S."/>
            <person name="Lelaure V."/>
            <person name="Mottier S."/>
            <person name="Galibert F."/>
            <person name="Aves S.J."/>
            <person name="Xiang Z."/>
            <person name="Hunt C."/>
            <person name="Moore K."/>
            <person name="Hurst S.M."/>
            <person name="Lucas M."/>
            <person name="Rochet M."/>
            <person name="Gaillardin C."/>
            <person name="Tallada V.A."/>
            <person name="Garzon A."/>
            <person name="Thode G."/>
            <person name="Daga R.R."/>
            <person name="Cruzado L."/>
            <person name="Jimenez J."/>
            <person name="Sanchez M."/>
            <person name="del Rey F."/>
            <person name="Benito J."/>
            <person name="Dominguez A."/>
            <person name="Revuelta J.L."/>
            <person name="Moreno S."/>
            <person name="Armstrong J."/>
            <person name="Forsburg S.L."/>
            <person name="Cerutti L."/>
            <person name="Lowe T."/>
            <person name="McCombie W.R."/>
            <person name="Paulsen I."/>
            <person name="Potashkin J."/>
            <person name="Shpakovski G.V."/>
            <person name="Ussery D."/>
            <person name="Barrell B.G."/>
            <person name="Nurse P."/>
        </authorList>
    </citation>
    <scope>NUCLEOTIDE SEQUENCE [LARGE SCALE GENOMIC DNA]</scope>
    <source>
        <strain>972 / ATCC 24843</strain>
    </source>
</reference>
<feature type="chain" id="PRO_0000084684" description="26S proteasome regulatory subunit 4 homolog">
    <location>
        <begin position="1"/>
        <end position="448"/>
    </location>
</feature>
<feature type="region of interest" description="Disordered" evidence="2">
    <location>
        <begin position="1"/>
        <end position="58"/>
    </location>
</feature>
<feature type="compositionally biased region" description="Polar residues" evidence="2">
    <location>
        <begin position="1"/>
        <end position="10"/>
    </location>
</feature>
<feature type="compositionally biased region" description="Basic and acidic residues" evidence="2">
    <location>
        <begin position="19"/>
        <end position="31"/>
    </location>
</feature>
<feature type="binding site" evidence="1">
    <location>
        <begin position="232"/>
        <end position="239"/>
    </location>
    <ligand>
        <name>ATP</name>
        <dbReference type="ChEBI" id="CHEBI:30616"/>
    </ligand>
</feature>
<name>PRS4_SCHPO</name>
<organism>
    <name type="scientific">Schizosaccharomyces pombe (strain 972 / ATCC 24843)</name>
    <name type="common">Fission yeast</name>
    <dbReference type="NCBI Taxonomy" id="284812"/>
    <lineage>
        <taxon>Eukaryota</taxon>
        <taxon>Fungi</taxon>
        <taxon>Dikarya</taxon>
        <taxon>Ascomycota</taxon>
        <taxon>Taphrinomycotina</taxon>
        <taxon>Schizosaccharomycetes</taxon>
        <taxon>Schizosaccharomycetales</taxon>
        <taxon>Schizosaccharomycetaceae</taxon>
        <taxon>Schizosaccharomyces</taxon>
    </lineage>
</organism>
<accession>P36612</accession>